<dbReference type="EMBL" id="AM933173">
    <property type="protein sequence ID" value="CAR39246.1"/>
    <property type="molecule type" value="Genomic_DNA"/>
</dbReference>
<dbReference type="RefSeq" id="WP_001207203.1">
    <property type="nucleotide sequence ID" value="NC_011274.1"/>
</dbReference>
<dbReference type="GeneID" id="93756505"/>
<dbReference type="KEGG" id="seg:SG3456"/>
<dbReference type="HOGENOM" id="CLU_092227_0_2_6"/>
<dbReference type="Proteomes" id="UP000008321">
    <property type="component" value="Chromosome"/>
</dbReference>
<dbReference type="GO" id="GO:0015934">
    <property type="term" value="C:large ribosomal subunit"/>
    <property type="evidence" value="ECO:0007669"/>
    <property type="project" value="InterPro"/>
</dbReference>
<dbReference type="GO" id="GO:0070180">
    <property type="term" value="F:large ribosomal subunit rRNA binding"/>
    <property type="evidence" value="ECO:0007669"/>
    <property type="project" value="UniProtKB-UniRule"/>
</dbReference>
<dbReference type="GO" id="GO:0003735">
    <property type="term" value="F:structural constituent of ribosome"/>
    <property type="evidence" value="ECO:0007669"/>
    <property type="project" value="InterPro"/>
</dbReference>
<dbReference type="GO" id="GO:0006412">
    <property type="term" value="P:translation"/>
    <property type="evidence" value="ECO:0007669"/>
    <property type="project" value="UniProtKB-UniRule"/>
</dbReference>
<dbReference type="CDD" id="cd05797">
    <property type="entry name" value="Ribosomal_L10"/>
    <property type="match status" value="1"/>
</dbReference>
<dbReference type="FunFam" id="3.30.70.1730:FF:000001">
    <property type="entry name" value="50S ribosomal protein L10"/>
    <property type="match status" value="1"/>
</dbReference>
<dbReference type="Gene3D" id="3.30.70.1730">
    <property type="match status" value="1"/>
</dbReference>
<dbReference type="Gene3D" id="6.10.250.2350">
    <property type="match status" value="1"/>
</dbReference>
<dbReference type="HAMAP" id="MF_00362">
    <property type="entry name" value="Ribosomal_uL10"/>
    <property type="match status" value="1"/>
</dbReference>
<dbReference type="InterPro" id="IPR001790">
    <property type="entry name" value="Ribosomal_uL10"/>
</dbReference>
<dbReference type="InterPro" id="IPR043141">
    <property type="entry name" value="Ribosomal_uL10-like_sf"/>
</dbReference>
<dbReference type="InterPro" id="IPR022973">
    <property type="entry name" value="Ribosomal_uL10_bac"/>
</dbReference>
<dbReference type="InterPro" id="IPR047865">
    <property type="entry name" value="Ribosomal_uL10_bac_type"/>
</dbReference>
<dbReference type="InterPro" id="IPR002363">
    <property type="entry name" value="Ribosomal_uL10_CS_bac"/>
</dbReference>
<dbReference type="NCBIfam" id="NF000955">
    <property type="entry name" value="PRK00099.1-1"/>
    <property type="match status" value="1"/>
</dbReference>
<dbReference type="PANTHER" id="PTHR11560">
    <property type="entry name" value="39S RIBOSOMAL PROTEIN L10, MITOCHONDRIAL"/>
    <property type="match status" value="1"/>
</dbReference>
<dbReference type="Pfam" id="PF00466">
    <property type="entry name" value="Ribosomal_L10"/>
    <property type="match status" value="1"/>
</dbReference>
<dbReference type="SUPFAM" id="SSF160369">
    <property type="entry name" value="Ribosomal protein L10-like"/>
    <property type="match status" value="1"/>
</dbReference>
<dbReference type="PROSITE" id="PS01109">
    <property type="entry name" value="RIBOSOMAL_L10"/>
    <property type="match status" value="1"/>
</dbReference>
<accession>B5RFK3</accession>
<proteinExistence type="inferred from homology"/>
<comment type="function">
    <text evidence="1">Forms part of the ribosomal stalk, playing a central role in the interaction of the ribosome with GTP-bound translation factors.</text>
</comment>
<comment type="subunit">
    <text evidence="1">Part of the ribosomal stalk of the 50S ribosomal subunit. The N-terminus interacts with L11 and the large rRNA to form the base of the stalk. The C-terminus forms an elongated spine to which L12 dimers bind in a sequential fashion forming a multimeric L10(L12)X complex.</text>
</comment>
<comment type="similarity">
    <text evidence="1">Belongs to the universal ribosomal protein uL10 family.</text>
</comment>
<organism>
    <name type="scientific">Salmonella gallinarum (strain 287/91 / NCTC 13346)</name>
    <dbReference type="NCBI Taxonomy" id="550538"/>
    <lineage>
        <taxon>Bacteria</taxon>
        <taxon>Pseudomonadati</taxon>
        <taxon>Pseudomonadota</taxon>
        <taxon>Gammaproteobacteria</taxon>
        <taxon>Enterobacterales</taxon>
        <taxon>Enterobacteriaceae</taxon>
        <taxon>Salmonella</taxon>
    </lineage>
</organism>
<name>RL10_SALG2</name>
<reference key="1">
    <citation type="journal article" date="2008" name="Genome Res.">
        <title>Comparative genome analysis of Salmonella enteritidis PT4 and Salmonella gallinarum 287/91 provides insights into evolutionary and host adaptation pathways.</title>
        <authorList>
            <person name="Thomson N.R."/>
            <person name="Clayton D.J."/>
            <person name="Windhorst D."/>
            <person name="Vernikos G."/>
            <person name="Davidson S."/>
            <person name="Churcher C."/>
            <person name="Quail M.A."/>
            <person name="Stevens M."/>
            <person name="Jones M.A."/>
            <person name="Watson M."/>
            <person name="Barron A."/>
            <person name="Layton A."/>
            <person name="Pickard D."/>
            <person name="Kingsley R.A."/>
            <person name="Bignell A."/>
            <person name="Clark L."/>
            <person name="Harris B."/>
            <person name="Ormond D."/>
            <person name="Abdellah Z."/>
            <person name="Brooks K."/>
            <person name="Cherevach I."/>
            <person name="Chillingworth T."/>
            <person name="Woodward J."/>
            <person name="Norberczak H."/>
            <person name="Lord A."/>
            <person name="Arrowsmith C."/>
            <person name="Jagels K."/>
            <person name="Moule S."/>
            <person name="Mungall K."/>
            <person name="Saunders M."/>
            <person name="Whitehead S."/>
            <person name="Chabalgoity J.A."/>
            <person name="Maskell D."/>
            <person name="Humphreys T."/>
            <person name="Roberts M."/>
            <person name="Barrow P.A."/>
            <person name="Dougan G."/>
            <person name="Parkhill J."/>
        </authorList>
    </citation>
    <scope>NUCLEOTIDE SEQUENCE [LARGE SCALE GENOMIC DNA]</scope>
    <source>
        <strain>287/91 / NCTC 13346</strain>
    </source>
</reference>
<gene>
    <name evidence="1" type="primary">rplJ</name>
    <name type="ordered locus">SG3456</name>
</gene>
<feature type="chain" id="PRO_1000121009" description="Large ribosomal subunit protein uL10">
    <location>
        <begin position="1"/>
        <end position="165"/>
    </location>
</feature>
<sequence length="165" mass="17801">MALNLQDKQAIVAEVSEVAKGALSAVVADSRGVTVDKMTELRKAGREAGVYMRVVRNTLLRRVVEGTQFECLKDTFVGPTLIAYSMEHPGAAARLFKEFAKANAKFEVKAAAFEGELIPASQIDRLATLPTYEEAIARLMATMKEASAGKLVRTLAAVRDAKEAA</sequence>
<evidence type="ECO:0000255" key="1">
    <source>
        <dbReference type="HAMAP-Rule" id="MF_00362"/>
    </source>
</evidence>
<evidence type="ECO:0000305" key="2"/>
<protein>
    <recommendedName>
        <fullName evidence="1">Large ribosomal subunit protein uL10</fullName>
    </recommendedName>
    <alternativeName>
        <fullName evidence="2">50S ribosomal protein L10</fullName>
    </alternativeName>
</protein>
<keyword id="KW-0687">Ribonucleoprotein</keyword>
<keyword id="KW-0689">Ribosomal protein</keyword>
<keyword id="KW-0694">RNA-binding</keyword>
<keyword id="KW-0699">rRNA-binding</keyword>